<reference key="1">
    <citation type="journal article" date="2004" name="Nat. Biotechnol.">
        <title>The genome sequence of the capnophilic rumen bacterium Mannheimia succiniciproducens.</title>
        <authorList>
            <person name="Hong S.H."/>
            <person name="Kim J.S."/>
            <person name="Lee S.Y."/>
            <person name="In Y.H."/>
            <person name="Choi S.S."/>
            <person name="Rih J.-K."/>
            <person name="Kim C.H."/>
            <person name="Jeong H."/>
            <person name="Hur C.G."/>
            <person name="Kim J.J."/>
        </authorList>
    </citation>
    <scope>NUCLEOTIDE SEQUENCE [LARGE SCALE GENOMIC DNA]</scope>
    <source>
        <strain>KCTC 0769BP / MBEL55E</strain>
    </source>
</reference>
<accession>Q65W90</accession>
<organism>
    <name type="scientific">Mannheimia succiniciproducens (strain KCTC 0769BP / MBEL55E)</name>
    <dbReference type="NCBI Taxonomy" id="221988"/>
    <lineage>
        <taxon>Bacteria</taxon>
        <taxon>Pseudomonadati</taxon>
        <taxon>Pseudomonadota</taxon>
        <taxon>Gammaproteobacteria</taxon>
        <taxon>Pasteurellales</taxon>
        <taxon>Pasteurellaceae</taxon>
        <taxon>Basfia</taxon>
    </lineage>
</organism>
<sequence length="156" mass="17659">MPRRRSIEPRKILPDPKFGSELLAKFINVLMVDGKKSIAESIVYNALDTLAQRTNKDALVAFEEALENVRPTVEVKSRRVGGSTYQVPVEVRPARRNALGMRWIVEAARKRGDKSMALRLANELSDASENKGSAVKKREDVHRMAEANKAFAHYRW</sequence>
<dbReference type="EMBL" id="AE016827">
    <property type="protein sequence ID" value="AAU36770.1"/>
    <property type="status" value="ALT_INIT"/>
    <property type="molecule type" value="Genomic_DNA"/>
</dbReference>
<dbReference type="RefSeq" id="WP_011199346.1">
    <property type="nucleotide sequence ID" value="NC_006300.1"/>
</dbReference>
<dbReference type="SMR" id="Q65W90"/>
<dbReference type="STRING" id="221988.MS0163"/>
<dbReference type="KEGG" id="msu:MS0163"/>
<dbReference type="eggNOG" id="COG0049">
    <property type="taxonomic scope" value="Bacteria"/>
</dbReference>
<dbReference type="HOGENOM" id="CLU_072226_1_1_6"/>
<dbReference type="OrthoDB" id="9807653at2"/>
<dbReference type="Proteomes" id="UP000000607">
    <property type="component" value="Chromosome"/>
</dbReference>
<dbReference type="GO" id="GO:0015935">
    <property type="term" value="C:small ribosomal subunit"/>
    <property type="evidence" value="ECO:0007669"/>
    <property type="project" value="InterPro"/>
</dbReference>
<dbReference type="GO" id="GO:0019843">
    <property type="term" value="F:rRNA binding"/>
    <property type="evidence" value="ECO:0007669"/>
    <property type="project" value="UniProtKB-UniRule"/>
</dbReference>
<dbReference type="GO" id="GO:0003735">
    <property type="term" value="F:structural constituent of ribosome"/>
    <property type="evidence" value="ECO:0007669"/>
    <property type="project" value="InterPro"/>
</dbReference>
<dbReference type="GO" id="GO:0000049">
    <property type="term" value="F:tRNA binding"/>
    <property type="evidence" value="ECO:0007669"/>
    <property type="project" value="UniProtKB-UniRule"/>
</dbReference>
<dbReference type="GO" id="GO:0006412">
    <property type="term" value="P:translation"/>
    <property type="evidence" value="ECO:0007669"/>
    <property type="project" value="UniProtKB-UniRule"/>
</dbReference>
<dbReference type="CDD" id="cd14869">
    <property type="entry name" value="uS7_Bacteria"/>
    <property type="match status" value="1"/>
</dbReference>
<dbReference type="FunFam" id="1.10.455.10:FF:000001">
    <property type="entry name" value="30S ribosomal protein S7"/>
    <property type="match status" value="1"/>
</dbReference>
<dbReference type="Gene3D" id="1.10.455.10">
    <property type="entry name" value="Ribosomal protein S7 domain"/>
    <property type="match status" value="1"/>
</dbReference>
<dbReference type="HAMAP" id="MF_00480_B">
    <property type="entry name" value="Ribosomal_uS7_B"/>
    <property type="match status" value="1"/>
</dbReference>
<dbReference type="InterPro" id="IPR000235">
    <property type="entry name" value="Ribosomal_uS7"/>
</dbReference>
<dbReference type="InterPro" id="IPR005717">
    <property type="entry name" value="Ribosomal_uS7_bac/org-type"/>
</dbReference>
<dbReference type="InterPro" id="IPR020606">
    <property type="entry name" value="Ribosomal_uS7_CS"/>
</dbReference>
<dbReference type="InterPro" id="IPR023798">
    <property type="entry name" value="Ribosomal_uS7_dom"/>
</dbReference>
<dbReference type="InterPro" id="IPR036823">
    <property type="entry name" value="Ribosomal_uS7_dom_sf"/>
</dbReference>
<dbReference type="NCBIfam" id="TIGR01029">
    <property type="entry name" value="rpsG_bact"/>
    <property type="match status" value="1"/>
</dbReference>
<dbReference type="PANTHER" id="PTHR11205">
    <property type="entry name" value="RIBOSOMAL PROTEIN S7"/>
    <property type="match status" value="1"/>
</dbReference>
<dbReference type="Pfam" id="PF00177">
    <property type="entry name" value="Ribosomal_S7"/>
    <property type="match status" value="1"/>
</dbReference>
<dbReference type="PIRSF" id="PIRSF002122">
    <property type="entry name" value="RPS7p_RPS7a_RPS5e_RPS7o"/>
    <property type="match status" value="1"/>
</dbReference>
<dbReference type="SUPFAM" id="SSF47973">
    <property type="entry name" value="Ribosomal protein S7"/>
    <property type="match status" value="1"/>
</dbReference>
<dbReference type="PROSITE" id="PS00052">
    <property type="entry name" value="RIBOSOMAL_S7"/>
    <property type="match status" value="1"/>
</dbReference>
<protein>
    <recommendedName>
        <fullName evidence="1">Small ribosomal subunit protein uS7</fullName>
    </recommendedName>
    <alternativeName>
        <fullName evidence="2">30S ribosomal protein S7</fullName>
    </alternativeName>
</protein>
<gene>
    <name evidence="1" type="primary">rpsG</name>
    <name type="ordered locus">MS0163</name>
</gene>
<keyword id="KW-0687">Ribonucleoprotein</keyword>
<keyword id="KW-0689">Ribosomal protein</keyword>
<keyword id="KW-0694">RNA-binding</keyword>
<keyword id="KW-0699">rRNA-binding</keyword>
<keyword id="KW-0820">tRNA-binding</keyword>
<feature type="chain" id="PRO_0000124289" description="Small ribosomal subunit protein uS7">
    <location>
        <begin position="1"/>
        <end position="156"/>
    </location>
</feature>
<comment type="function">
    <text evidence="1">One of the primary rRNA binding proteins, it binds directly to 16S rRNA where it nucleates assembly of the head domain of the 30S subunit. Is located at the subunit interface close to the decoding center, probably blocks exit of the E-site tRNA.</text>
</comment>
<comment type="subunit">
    <text evidence="1">Part of the 30S ribosomal subunit. Contacts proteins S9 and S11.</text>
</comment>
<comment type="similarity">
    <text evidence="1">Belongs to the universal ribosomal protein uS7 family.</text>
</comment>
<comment type="sequence caution" evidence="2">
    <conflict type="erroneous initiation">
        <sequence resource="EMBL-CDS" id="AAU36770"/>
    </conflict>
</comment>
<name>RS7_MANSM</name>
<proteinExistence type="inferred from homology"/>
<evidence type="ECO:0000255" key="1">
    <source>
        <dbReference type="HAMAP-Rule" id="MF_00480"/>
    </source>
</evidence>
<evidence type="ECO:0000305" key="2"/>